<gene>
    <name evidence="1" type="primary">ezrA</name>
    <name type="ordered locus">NWMN_1611</name>
</gene>
<accession>A6QHQ1</accession>
<reference key="1">
    <citation type="journal article" date="2008" name="J. Bacteriol.">
        <title>Genome sequence of Staphylococcus aureus strain Newman and comparative analysis of staphylococcal genomes: polymorphism and evolution of two major pathogenicity islands.</title>
        <authorList>
            <person name="Baba T."/>
            <person name="Bae T."/>
            <person name="Schneewind O."/>
            <person name="Takeuchi F."/>
            <person name="Hiramatsu K."/>
        </authorList>
    </citation>
    <scope>NUCLEOTIDE SEQUENCE [LARGE SCALE GENOMIC DNA]</scope>
    <source>
        <strain>Newman</strain>
    </source>
</reference>
<evidence type="ECO:0000255" key="1">
    <source>
        <dbReference type="HAMAP-Rule" id="MF_00728"/>
    </source>
</evidence>
<comment type="function">
    <text evidence="1">Negative regulator of FtsZ ring formation; modulates the frequency and position of FtsZ ring formation. Inhibits FtsZ ring formation at polar sites. Interacts either with FtsZ or with one of its binding partners to promote depolymerization.</text>
</comment>
<comment type="subcellular location">
    <subcellularLocation>
        <location evidence="1">Cell membrane</location>
        <topology evidence="1">Single-pass membrane protein</topology>
    </subcellularLocation>
    <text evidence="1">Colocalized with FtsZ to the nascent septal site.</text>
</comment>
<comment type="similarity">
    <text evidence="1">Belongs to the EzrA family.</text>
</comment>
<dbReference type="EMBL" id="AP009351">
    <property type="protein sequence ID" value="BAF67883.1"/>
    <property type="molecule type" value="Genomic_DNA"/>
</dbReference>
<dbReference type="RefSeq" id="WP_000244865.1">
    <property type="nucleotide sequence ID" value="NZ_JBBIAE010000009.1"/>
</dbReference>
<dbReference type="SMR" id="A6QHQ1"/>
<dbReference type="KEGG" id="sae:NWMN_1611"/>
<dbReference type="HOGENOM" id="CLU_034079_1_0_9"/>
<dbReference type="Proteomes" id="UP000006386">
    <property type="component" value="Chromosome"/>
</dbReference>
<dbReference type="GO" id="GO:0005886">
    <property type="term" value="C:plasma membrane"/>
    <property type="evidence" value="ECO:0007669"/>
    <property type="project" value="UniProtKB-SubCell"/>
</dbReference>
<dbReference type="GO" id="GO:0005940">
    <property type="term" value="C:septin ring"/>
    <property type="evidence" value="ECO:0007669"/>
    <property type="project" value="InterPro"/>
</dbReference>
<dbReference type="GO" id="GO:0000917">
    <property type="term" value="P:division septum assembly"/>
    <property type="evidence" value="ECO:0007669"/>
    <property type="project" value="UniProtKB-KW"/>
</dbReference>
<dbReference type="GO" id="GO:0000921">
    <property type="term" value="P:septin ring assembly"/>
    <property type="evidence" value="ECO:0007669"/>
    <property type="project" value="InterPro"/>
</dbReference>
<dbReference type="HAMAP" id="MF_00728">
    <property type="entry name" value="EzrA"/>
    <property type="match status" value="1"/>
</dbReference>
<dbReference type="InterPro" id="IPR010379">
    <property type="entry name" value="EzrA"/>
</dbReference>
<dbReference type="NCBIfam" id="NF003412">
    <property type="entry name" value="PRK04778.1-6"/>
    <property type="match status" value="1"/>
</dbReference>
<dbReference type="Pfam" id="PF06160">
    <property type="entry name" value="EzrA"/>
    <property type="match status" value="1"/>
</dbReference>
<protein>
    <recommendedName>
        <fullName evidence="1">Septation ring formation regulator EzrA</fullName>
    </recommendedName>
</protein>
<proteinExistence type="inferred from homology"/>
<sequence length="564" mass="66200">MVLYIILAIIVIILIAVGVLFYLRSNKRQIIEKAIERKNEIETLPFDQNLAQLSKLNLKGETKTKYDAMKKDNVESTNKYLAPVEEKIHNAEALLDKFSFNASQSEIDDANELMDSYEQSYQQQLEDVNEIIALYKDNDELYDKCKVDYREMKRDVLANRHQFGEAASLLETEIEKFEPRLEQYEVLKADGNYVQAHNHIAALNEQMKQLRSYMEEIPELIRETQKELPGQFQDLKYGCRDLKVEGYDLDHVKVDSTLQSLKTELSFVEPLISRLELEEANDKLANINDKLDDMYDLIEHEVKAKNDVEETKDIITDNLFKAKDMNYTLQTEIEYVRENYYINESDAQSVRQFENEIQSLISVYDDILKEMSKSAVRYSEVQDNLQYLEDHVTVINDKQEKLQNHLIQLREDEAEAEDNLLRVQSKKEEVYRRLLASNLTSVPERFIIMKNEIDHEVRDVNEQFSERPIHVKQLKDKVSKIVIQMNTFEDEANDVLVNAVYAEKLIQYGNRYRKDYSNVDKSLNEAERLFKNNRYKRAIEIAEQALESVEPGVTKHIEEEVIKQ</sequence>
<name>EZRA_STAAE</name>
<feature type="chain" id="PRO_1000072782" description="Septation ring formation regulator EzrA">
    <location>
        <begin position="1"/>
        <end position="564"/>
    </location>
</feature>
<feature type="topological domain" description="Extracellular" evidence="1">
    <location>
        <begin position="1"/>
        <end position="4"/>
    </location>
</feature>
<feature type="transmembrane region" description="Helical" evidence="1">
    <location>
        <begin position="5"/>
        <end position="23"/>
    </location>
</feature>
<feature type="topological domain" description="Cytoplasmic" evidence="1">
    <location>
        <begin position="24"/>
        <end position="564"/>
    </location>
</feature>
<feature type="coiled-coil region" evidence="1">
    <location>
        <begin position="99"/>
        <end position="138"/>
    </location>
</feature>
<feature type="coiled-coil region" evidence="1">
    <location>
        <begin position="190"/>
        <end position="223"/>
    </location>
</feature>
<feature type="coiled-coil region" evidence="1">
    <location>
        <begin position="271"/>
        <end position="300"/>
    </location>
</feature>
<feature type="coiled-coil region" evidence="1">
    <location>
        <begin position="350"/>
        <end position="435"/>
    </location>
</feature>
<feature type="coiled-coil region" evidence="1">
    <location>
        <begin position="471"/>
        <end position="550"/>
    </location>
</feature>
<organism>
    <name type="scientific">Staphylococcus aureus (strain Newman)</name>
    <dbReference type="NCBI Taxonomy" id="426430"/>
    <lineage>
        <taxon>Bacteria</taxon>
        <taxon>Bacillati</taxon>
        <taxon>Bacillota</taxon>
        <taxon>Bacilli</taxon>
        <taxon>Bacillales</taxon>
        <taxon>Staphylococcaceae</taxon>
        <taxon>Staphylococcus</taxon>
    </lineage>
</organism>
<keyword id="KW-0131">Cell cycle</keyword>
<keyword id="KW-0132">Cell division</keyword>
<keyword id="KW-1003">Cell membrane</keyword>
<keyword id="KW-0175">Coiled coil</keyword>
<keyword id="KW-0472">Membrane</keyword>
<keyword id="KW-0717">Septation</keyword>
<keyword id="KW-0812">Transmembrane</keyword>
<keyword id="KW-1133">Transmembrane helix</keyword>